<proteinExistence type="inferred from homology"/>
<keyword id="KW-0997">Cell inner membrane</keyword>
<keyword id="KW-1003">Cell membrane</keyword>
<keyword id="KW-0378">Hydrolase</keyword>
<keyword id="KW-0472">Membrane</keyword>
<keyword id="KW-0479">Metal-binding</keyword>
<keyword id="KW-0482">Metalloprotease</keyword>
<keyword id="KW-0645">Protease</keyword>
<keyword id="KW-1185">Reference proteome</keyword>
<keyword id="KW-0812">Transmembrane</keyword>
<keyword id="KW-1133">Transmembrane helix</keyword>
<keyword id="KW-0862">Zinc</keyword>
<gene>
    <name evidence="1" type="primary">htpX</name>
    <name type="ordered locus">AHA_1493</name>
</gene>
<organism>
    <name type="scientific">Aeromonas hydrophila subsp. hydrophila (strain ATCC 7966 / DSM 30187 / BCRC 13018 / CCUG 14551 / JCM 1027 / KCTC 2358 / NCIMB 9240 / NCTC 8049)</name>
    <dbReference type="NCBI Taxonomy" id="380703"/>
    <lineage>
        <taxon>Bacteria</taxon>
        <taxon>Pseudomonadati</taxon>
        <taxon>Pseudomonadota</taxon>
        <taxon>Gammaproteobacteria</taxon>
        <taxon>Aeromonadales</taxon>
        <taxon>Aeromonadaceae</taxon>
        <taxon>Aeromonas</taxon>
    </lineage>
</organism>
<feature type="chain" id="PRO_1000020838" description="Protease HtpX">
    <location>
        <begin position="1"/>
        <end position="290"/>
    </location>
</feature>
<feature type="transmembrane region" description="Helical" evidence="1">
    <location>
        <begin position="6"/>
        <end position="26"/>
    </location>
</feature>
<feature type="transmembrane region" description="Helical" evidence="1">
    <location>
        <begin position="36"/>
        <end position="56"/>
    </location>
</feature>
<feature type="transmembrane region" description="Helical" evidence="1">
    <location>
        <begin position="158"/>
        <end position="178"/>
    </location>
</feature>
<feature type="transmembrane region" description="Helical" evidence="1">
    <location>
        <begin position="200"/>
        <end position="220"/>
    </location>
</feature>
<feature type="active site" evidence="1">
    <location>
        <position position="144"/>
    </location>
</feature>
<feature type="binding site" evidence="1">
    <location>
        <position position="143"/>
    </location>
    <ligand>
        <name>Zn(2+)</name>
        <dbReference type="ChEBI" id="CHEBI:29105"/>
        <note>catalytic</note>
    </ligand>
</feature>
<feature type="binding site" evidence="1">
    <location>
        <position position="147"/>
    </location>
    <ligand>
        <name>Zn(2+)</name>
        <dbReference type="ChEBI" id="CHEBI:29105"/>
        <note>catalytic</note>
    </ligand>
</feature>
<feature type="binding site" evidence="1">
    <location>
        <position position="225"/>
    </location>
    <ligand>
        <name>Zn(2+)</name>
        <dbReference type="ChEBI" id="CHEBI:29105"/>
        <note>catalytic</note>
    </ligand>
</feature>
<name>HTPX_AERHH</name>
<accession>A0KID0</accession>
<sequence>MKRIMLFLVTNLAVMLVLGVVLNILFSVLGINKSSISGLLVFCAVFGFGGSFISLLMSKWMAKRSYGVQVIEQPRNETEHWLVSTVARQAREAGIKMPEVGIYDSPEMNAFATGARRDDSLVAVSSGLLYSMSRDEAEAVLAHEVSHVANGDMVTLTLIQGVVNTFVMFFARIVAGVISNFFSSNNDEESSSTGGFAYMITVFVLEMLFGVLASIIVMWFSRQREFRADAGAAKLAGRDKMIAALQRLSRGAEPQLEGSMMAFGINGKRSMSELFMSHPPIEQRIAALRG</sequence>
<dbReference type="EC" id="3.4.24.-" evidence="1"/>
<dbReference type="EMBL" id="CP000462">
    <property type="protein sequence ID" value="ABK39520.1"/>
    <property type="molecule type" value="Genomic_DNA"/>
</dbReference>
<dbReference type="RefSeq" id="WP_011705391.1">
    <property type="nucleotide sequence ID" value="NC_008570.1"/>
</dbReference>
<dbReference type="RefSeq" id="YP_856031.1">
    <property type="nucleotide sequence ID" value="NC_008570.1"/>
</dbReference>
<dbReference type="SMR" id="A0KID0"/>
<dbReference type="STRING" id="380703.AHA_1493"/>
<dbReference type="MEROPS" id="M48.002"/>
<dbReference type="EnsemblBacteria" id="ABK39520">
    <property type="protein sequence ID" value="ABK39520"/>
    <property type="gene ID" value="AHA_1493"/>
</dbReference>
<dbReference type="GeneID" id="4487694"/>
<dbReference type="KEGG" id="aha:AHA_1493"/>
<dbReference type="PATRIC" id="fig|380703.7.peg.1504"/>
<dbReference type="eggNOG" id="COG0501">
    <property type="taxonomic scope" value="Bacteria"/>
</dbReference>
<dbReference type="HOGENOM" id="CLU_042266_1_0_6"/>
<dbReference type="OrthoDB" id="15218at2"/>
<dbReference type="Proteomes" id="UP000000756">
    <property type="component" value="Chromosome"/>
</dbReference>
<dbReference type="GO" id="GO:0005886">
    <property type="term" value="C:plasma membrane"/>
    <property type="evidence" value="ECO:0007669"/>
    <property type="project" value="UniProtKB-SubCell"/>
</dbReference>
<dbReference type="GO" id="GO:0004222">
    <property type="term" value="F:metalloendopeptidase activity"/>
    <property type="evidence" value="ECO:0007669"/>
    <property type="project" value="UniProtKB-UniRule"/>
</dbReference>
<dbReference type="GO" id="GO:0008270">
    <property type="term" value="F:zinc ion binding"/>
    <property type="evidence" value="ECO:0007669"/>
    <property type="project" value="UniProtKB-UniRule"/>
</dbReference>
<dbReference type="GO" id="GO:0006508">
    <property type="term" value="P:proteolysis"/>
    <property type="evidence" value="ECO:0007669"/>
    <property type="project" value="UniProtKB-KW"/>
</dbReference>
<dbReference type="CDD" id="cd07335">
    <property type="entry name" value="M48B_HtpX_like"/>
    <property type="match status" value="1"/>
</dbReference>
<dbReference type="FunFam" id="3.30.2010.10:FF:000001">
    <property type="entry name" value="Protease HtpX"/>
    <property type="match status" value="1"/>
</dbReference>
<dbReference type="Gene3D" id="3.30.2010.10">
    <property type="entry name" value="Metalloproteases ('zincins'), catalytic domain"/>
    <property type="match status" value="1"/>
</dbReference>
<dbReference type="HAMAP" id="MF_00188">
    <property type="entry name" value="Pept_M48_protease_HtpX"/>
    <property type="match status" value="1"/>
</dbReference>
<dbReference type="InterPro" id="IPR050083">
    <property type="entry name" value="HtpX_protease"/>
</dbReference>
<dbReference type="InterPro" id="IPR022919">
    <property type="entry name" value="Pept_M48_protease_HtpX"/>
</dbReference>
<dbReference type="InterPro" id="IPR001915">
    <property type="entry name" value="Peptidase_M48"/>
</dbReference>
<dbReference type="NCBIfam" id="NF003965">
    <property type="entry name" value="PRK05457.1"/>
    <property type="match status" value="1"/>
</dbReference>
<dbReference type="PANTHER" id="PTHR43221">
    <property type="entry name" value="PROTEASE HTPX"/>
    <property type="match status" value="1"/>
</dbReference>
<dbReference type="PANTHER" id="PTHR43221:SF1">
    <property type="entry name" value="PROTEASE HTPX"/>
    <property type="match status" value="1"/>
</dbReference>
<dbReference type="Pfam" id="PF01435">
    <property type="entry name" value="Peptidase_M48"/>
    <property type="match status" value="1"/>
</dbReference>
<reference key="1">
    <citation type="journal article" date="2006" name="J. Bacteriol.">
        <title>Genome sequence of Aeromonas hydrophila ATCC 7966T: jack of all trades.</title>
        <authorList>
            <person name="Seshadri R."/>
            <person name="Joseph S.W."/>
            <person name="Chopra A.K."/>
            <person name="Sha J."/>
            <person name="Shaw J."/>
            <person name="Graf J."/>
            <person name="Haft D.H."/>
            <person name="Wu M."/>
            <person name="Ren Q."/>
            <person name="Rosovitz M.J."/>
            <person name="Madupu R."/>
            <person name="Tallon L."/>
            <person name="Kim M."/>
            <person name="Jin S."/>
            <person name="Vuong H."/>
            <person name="Stine O.C."/>
            <person name="Ali A."/>
            <person name="Horneman A.J."/>
            <person name="Heidelberg J.F."/>
        </authorList>
    </citation>
    <scope>NUCLEOTIDE SEQUENCE [LARGE SCALE GENOMIC DNA]</scope>
    <source>
        <strain>ATCC 7966 / DSM 30187 / BCRC 13018 / CCUG 14551 / JCM 1027 / KCTC 2358 / NCIMB 9240 / NCTC 8049</strain>
    </source>
</reference>
<comment type="cofactor">
    <cofactor evidence="1">
        <name>Zn(2+)</name>
        <dbReference type="ChEBI" id="CHEBI:29105"/>
    </cofactor>
    <text evidence="1">Binds 1 zinc ion per subunit.</text>
</comment>
<comment type="subcellular location">
    <subcellularLocation>
        <location evidence="1">Cell inner membrane</location>
        <topology evidence="1">Multi-pass membrane protein</topology>
    </subcellularLocation>
</comment>
<comment type="similarity">
    <text evidence="1">Belongs to the peptidase M48B family.</text>
</comment>
<evidence type="ECO:0000255" key="1">
    <source>
        <dbReference type="HAMAP-Rule" id="MF_00188"/>
    </source>
</evidence>
<protein>
    <recommendedName>
        <fullName evidence="1">Protease HtpX</fullName>
        <ecNumber evidence="1">3.4.24.-</ecNumber>
    </recommendedName>
    <alternativeName>
        <fullName evidence="1">Heat shock protein HtpX</fullName>
    </alternativeName>
</protein>